<organism>
    <name type="scientific">Acryllium vulturinum</name>
    <name type="common">Vulturine guineafowl</name>
    <name type="synonym">Numida vulturina</name>
    <dbReference type="NCBI Taxonomy" id="8992"/>
    <lineage>
        <taxon>Eukaryota</taxon>
        <taxon>Metazoa</taxon>
        <taxon>Chordata</taxon>
        <taxon>Craniata</taxon>
        <taxon>Vertebrata</taxon>
        <taxon>Euteleostomi</taxon>
        <taxon>Archelosauria</taxon>
        <taxon>Archosauria</taxon>
        <taxon>Dinosauria</taxon>
        <taxon>Saurischia</taxon>
        <taxon>Theropoda</taxon>
        <taxon>Coelurosauria</taxon>
        <taxon>Aves</taxon>
        <taxon>Neognathae</taxon>
        <taxon>Galloanserae</taxon>
        <taxon>Galliformes</taxon>
        <taxon>Numididae</taxon>
        <taxon>Acryllium</taxon>
    </lineage>
</organism>
<evidence type="ECO:0000255" key="1">
    <source>
        <dbReference type="PROSITE-ProRule" id="PRU00798"/>
    </source>
</evidence>
<dbReference type="PIR" id="G31446">
    <property type="entry name" value="G31446"/>
</dbReference>
<dbReference type="SMR" id="P68469"/>
<dbReference type="GO" id="GO:0005576">
    <property type="term" value="C:extracellular region"/>
    <property type="evidence" value="ECO:0007669"/>
    <property type="project" value="UniProtKB-SubCell"/>
</dbReference>
<dbReference type="GO" id="GO:0004867">
    <property type="term" value="F:serine-type endopeptidase inhibitor activity"/>
    <property type="evidence" value="ECO:0007669"/>
    <property type="project" value="UniProtKB-KW"/>
</dbReference>
<dbReference type="CDD" id="cd00104">
    <property type="entry name" value="KAZAL_FS"/>
    <property type="match status" value="1"/>
</dbReference>
<dbReference type="FunFam" id="3.30.60.30:FF:000037">
    <property type="entry name" value="Ovomucoid"/>
    <property type="match status" value="1"/>
</dbReference>
<dbReference type="Gene3D" id="3.30.60.30">
    <property type="match status" value="1"/>
</dbReference>
<dbReference type="InterPro" id="IPR051597">
    <property type="entry name" value="Bifunctional_prot_inhibitor"/>
</dbReference>
<dbReference type="InterPro" id="IPR002350">
    <property type="entry name" value="Kazal_dom"/>
</dbReference>
<dbReference type="InterPro" id="IPR036058">
    <property type="entry name" value="Kazal_dom_sf"/>
</dbReference>
<dbReference type="InterPro" id="IPR001239">
    <property type="entry name" value="Prot_inh_Kazal-m"/>
</dbReference>
<dbReference type="PANTHER" id="PTHR47729:SF1">
    <property type="entry name" value="OVOMUCOID-LIKE-RELATED"/>
    <property type="match status" value="1"/>
</dbReference>
<dbReference type="PANTHER" id="PTHR47729">
    <property type="entry name" value="SERINE PEPTIDASE INHIBITOR, KAZAL TYPE 2, TANDEM DUPLICATE 1-RELATED"/>
    <property type="match status" value="1"/>
</dbReference>
<dbReference type="Pfam" id="PF00050">
    <property type="entry name" value="Kazal_1"/>
    <property type="match status" value="1"/>
</dbReference>
<dbReference type="PRINTS" id="PR00290">
    <property type="entry name" value="KAZALINHBTR"/>
</dbReference>
<dbReference type="SMART" id="SM00280">
    <property type="entry name" value="KAZAL"/>
    <property type="match status" value="1"/>
</dbReference>
<dbReference type="SUPFAM" id="SSF100895">
    <property type="entry name" value="Kazal-type serine protease inhibitors"/>
    <property type="match status" value="1"/>
</dbReference>
<dbReference type="PROSITE" id="PS00282">
    <property type="entry name" value="KAZAL_1"/>
    <property type="match status" value="1"/>
</dbReference>
<dbReference type="PROSITE" id="PS51465">
    <property type="entry name" value="KAZAL_2"/>
    <property type="match status" value="1"/>
</dbReference>
<accession>P68469</accession>
<accession>P05610</accession>
<name>IOVO_ACRVU</name>
<protein>
    <recommendedName>
        <fullName>Ovomucoid</fullName>
    </recommendedName>
</protein>
<comment type="subcellular location">
    <subcellularLocation>
        <location>Secreted</location>
    </subcellularLocation>
</comment>
<comment type="domain">
    <text>Avian ovomucoid consists of three homologous, tandem Kazal family inhibitory domains.</text>
</comment>
<feature type="chain" id="PRO_0000073046" description="Ovomucoid">
    <location>
        <begin position="1" status="less than"/>
        <end position="54" status="greater than"/>
    </location>
</feature>
<feature type="domain" description="Kazal-like" evidence="1">
    <location>
        <begin position="4"/>
        <end position="54"/>
    </location>
</feature>
<feature type="site" description="Reactive bond 3">
    <location>
        <begin position="16"/>
        <end position="17"/>
    </location>
</feature>
<feature type="glycosylation site" description="N-linked (GlcNAc...) asparagine">
    <location>
        <position position="43"/>
    </location>
</feature>
<feature type="disulfide bond">
    <location>
        <begin position="6"/>
        <end position="36"/>
    </location>
</feature>
<feature type="disulfide bond">
    <location>
        <begin position="14"/>
        <end position="33"/>
    </location>
</feature>
<feature type="disulfide bond">
    <location>
        <begin position="22"/>
        <end position="54"/>
    </location>
</feature>
<feature type="non-terminal residue">
    <location>
        <position position="1"/>
    </location>
</feature>
<feature type="non-terminal residue">
    <location>
        <position position="54"/>
    </location>
</feature>
<proteinExistence type="evidence at protein level"/>
<sequence>LAAVDCSEYPKPACTMEYRPLCGSDNKTYDNKCNFCNAVVESNGTLTLSHFGKC</sequence>
<keyword id="KW-0903">Direct protein sequencing</keyword>
<keyword id="KW-1015">Disulfide bond</keyword>
<keyword id="KW-0325">Glycoprotein</keyword>
<keyword id="KW-0646">Protease inhibitor</keyword>
<keyword id="KW-0677">Repeat</keyword>
<keyword id="KW-0964">Secreted</keyword>
<keyword id="KW-0722">Serine protease inhibitor</keyword>
<reference key="1">
    <citation type="journal article" date="1987" name="Biochemistry">
        <title>Ovomucoid third domains from 100 avian species: isolation, sequences, and hypervariability of enzyme-inhibitor contact residues.</title>
        <authorList>
            <person name="Laskowski M. Jr."/>
            <person name="Kato I."/>
            <person name="Ardelt W."/>
            <person name="Cook J."/>
            <person name="Denton A."/>
            <person name="Empie M.W."/>
            <person name="Kohr W.J."/>
            <person name="Park S.J."/>
            <person name="Parks K."/>
            <person name="Schatzley B.L."/>
            <person name="Schoenberger O.L."/>
            <person name="Tashiro M."/>
            <person name="Vichot G."/>
            <person name="Whatley H.E."/>
            <person name="Wieczorek A."/>
            <person name="Wieczorek M."/>
        </authorList>
    </citation>
    <scope>PROTEIN SEQUENCE</scope>
</reference>